<gene>
    <name type="primary">DBP5</name>
    <name type="ORF">CIMG_00178</name>
</gene>
<evidence type="ECO:0000250" key="1"/>
<evidence type="ECO:0000255" key="2">
    <source>
        <dbReference type="PROSITE-ProRule" id="PRU00541"/>
    </source>
</evidence>
<evidence type="ECO:0000255" key="3">
    <source>
        <dbReference type="PROSITE-ProRule" id="PRU00542"/>
    </source>
</evidence>
<evidence type="ECO:0000256" key="4">
    <source>
        <dbReference type="SAM" id="MobiDB-lite"/>
    </source>
</evidence>
<evidence type="ECO:0000305" key="5"/>
<comment type="function">
    <text evidence="1">ATP-dependent RNA helicase associated with the nuclear pore complex and essential for mRNA export from the nucleus. May participate in a terminal step of mRNA export through the removal of proteins that accompany mRNA through the nucleopore complex. May also be involved in early transcription (By similarity).</text>
</comment>
<comment type="catalytic activity">
    <reaction>
        <text>ATP + H2O = ADP + phosphate + H(+)</text>
        <dbReference type="Rhea" id="RHEA:13065"/>
        <dbReference type="ChEBI" id="CHEBI:15377"/>
        <dbReference type="ChEBI" id="CHEBI:15378"/>
        <dbReference type="ChEBI" id="CHEBI:30616"/>
        <dbReference type="ChEBI" id="CHEBI:43474"/>
        <dbReference type="ChEBI" id="CHEBI:456216"/>
        <dbReference type="EC" id="3.6.4.13"/>
    </reaction>
</comment>
<comment type="subunit">
    <text evidence="1">Associates with the nuclear pore complex.</text>
</comment>
<comment type="subcellular location">
    <subcellularLocation>
        <location evidence="1">Cytoplasm</location>
    </subcellularLocation>
    <subcellularLocation>
        <location>Nucleus</location>
        <location>Nuclear pore complex</location>
    </subcellularLocation>
    <subcellularLocation>
        <location evidence="1">Nucleus membrane</location>
        <topology evidence="1">Peripheral membrane protein</topology>
        <orientation evidence="1">Cytoplasmic side</orientation>
    </subcellularLocation>
    <text evidence="1">Nuclear pore complex cytoplasmic fibrils.</text>
</comment>
<comment type="domain">
    <text>The Q motif is unique to and characteristic of the DEAD box family of RNA helicases and controls ATP binding and hydrolysis.</text>
</comment>
<comment type="similarity">
    <text evidence="5">Belongs to the DEAD box helicase family. DDX19/DBP5 subfamily.</text>
</comment>
<sequence length="495" mass="54632">MASENTTETPSVPAGGPLAARISRPEGDANPPSTEAEKPAAEDDSGKGPSIPQVDGASEDQRGSELQDSEFDVNVKLSDLQADPNNPLYSIKSFEELGLAEPIQMGLSKMNFRRPSKIQERALPLLMANPPTNMIAQSQSGTGKTAAFVLNILSRLELTPEKQKSPQALVLAPSRELARQIVGVIQAMGTFVEGLFVATAVPMEMNRNQRVEASIVVGTPGTVQDLIKKRLFNTQHLRVLVLDEADNMLDQQGLGDQCIRVKSLLPRTIQVVLFSATFPDFVVRYAHKFAPNSNQLTLKHEELTVEGIKQLYLDCESDEHKYEILVKFYGLLTIGSSIIFVKTRASAAEIERRMVAEGHTVVSLTGGIEGQKRDEIIDRFRNGTAKVLITTNVLARGIDVSTVSMVINYDIPELHLPGAARRMADAQTYLHRIGRTGRFGRVGVAVSFVSNQEEWQMLQDIQKYFSTNIERVDTRDWDDVEKKVKKIIKPSAVAR</sequence>
<accession>Q1EB85</accession>
<accession>J3KGE1</accession>
<feature type="chain" id="PRO_0000256015" description="ATP-dependent RNA helicase DBP5">
    <location>
        <begin position="1"/>
        <end position="495"/>
    </location>
</feature>
<feature type="domain" description="Helicase ATP-binding" evidence="2">
    <location>
        <begin position="125"/>
        <end position="296"/>
    </location>
</feature>
<feature type="domain" description="Helicase C-terminal" evidence="3">
    <location>
        <begin position="307"/>
        <end position="488"/>
    </location>
</feature>
<feature type="region of interest" description="Disordered" evidence="4">
    <location>
        <begin position="1"/>
        <end position="68"/>
    </location>
</feature>
<feature type="short sequence motif" description="Q motif">
    <location>
        <begin position="92"/>
        <end position="120"/>
    </location>
</feature>
<feature type="short sequence motif" description="DEAD box">
    <location>
        <begin position="243"/>
        <end position="246"/>
    </location>
</feature>
<feature type="compositionally biased region" description="Polar residues" evidence="4">
    <location>
        <begin position="1"/>
        <end position="10"/>
    </location>
</feature>
<feature type="compositionally biased region" description="Basic and acidic residues" evidence="4">
    <location>
        <begin position="35"/>
        <end position="46"/>
    </location>
</feature>
<feature type="binding site" evidence="2">
    <location>
        <begin position="138"/>
        <end position="145"/>
    </location>
    <ligand>
        <name>ATP</name>
        <dbReference type="ChEBI" id="CHEBI:30616"/>
    </ligand>
</feature>
<name>DBP5_COCIM</name>
<keyword id="KW-0067">ATP-binding</keyword>
<keyword id="KW-0963">Cytoplasm</keyword>
<keyword id="KW-0347">Helicase</keyword>
<keyword id="KW-0378">Hydrolase</keyword>
<keyword id="KW-0472">Membrane</keyword>
<keyword id="KW-0509">mRNA transport</keyword>
<keyword id="KW-0906">Nuclear pore complex</keyword>
<keyword id="KW-0547">Nucleotide-binding</keyword>
<keyword id="KW-0539">Nucleus</keyword>
<keyword id="KW-0653">Protein transport</keyword>
<keyword id="KW-1185">Reference proteome</keyword>
<keyword id="KW-0694">RNA-binding</keyword>
<keyword id="KW-0811">Translocation</keyword>
<keyword id="KW-0813">Transport</keyword>
<proteinExistence type="inferred from homology"/>
<dbReference type="EC" id="3.6.4.13"/>
<dbReference type="EMBL" id="GG704911">
    <property type="protein sequence ID" value="EAS34824.3"/>
    <property type="molecule type" value="Genomic_DNA"/>
</dbReference>
<dbReference type="RefSeq" id="XP_001246407.1">
    <property type="nucleotide sequence ID" value="XM_001246406.2"/>
</dbReference>
<dbReference type="SMR" id="Q1EB85"/>
<dbReference type="FunCoup" id="Q1EB85">
    <property type="interactions" value="733"/>
</dbReference>
<dbReference type="STRING" id="246410.Q1EB85"/>
<dbReference type="GeneID" id="4567941"/>
<dbReference type="KEGG" id="cim:CIMG_00178"/>
<dbReference type="VEuPathDB" id="FungiDB:CIMG_00178"/>
<dbReference type="InParanoid" id="Q1EB85"/>
<dbReference type="OMA" id="IAAETRW"/>
<dbReference type="OrthoDB" id="10265785at2759"/>
<dbReference type="Proteomes" id="UP000001261">
    <property type="component" value="Unassembled WGS sequence"/>
</dbReference>
<dbReference type="GO" id="GO:0005737">
    <property type="term" value="C:cytoplasm"/>
    <property type="evidence" value="ECO:0007669"/>
    <property type="project" value="UniProtKB-SubCell"/>
</dbReference>
<dbReference type="GO" id="GO:0031965">
    <property type="term" value="C:nuclear membrane"/>
    <property type="evidence" value="ECO:0007669"/>
    <property type="project" value="UniProtKB-SubCell"/>
</dbReference>
<dbReference type="GO" id="GO:0005643">
    <property type="term" value="C:nuclear pore"/>
    <property type="evidence" value="ECO:0007669"/>
    <property type="project" value="UniProtKB-SubCell"/>
</dbReference>
<dbReference type="GO" id="GO:0005524">
    <property type="term" value="F:ATP binding"/>
    <property type="evidence" value="ECO:0007669"/>
    <property type="project" value="UniProtKB-KW"/>
</dbReference>
<dbReference type="GO" id="GO:0016887">
    <property type="term" value="F:ATP hydrolysis activity"/>
    <property type="evidence" value="ECO:0007669"/>
    <property type="project" value="RHEA"/>
</dbReference>
<dbReference type="GO" id="GO:0003723">
    <property type="term" value="F:RNA binding"/>
    <property type="evidence" value="ECO:0007669"/>
    <property type="project" value="UniProtKB-KW"/>
</dbReference>
<dbReference type="GO" id="GO:0003724">
    <property type="term" value="F:RNA helicase activity"/>
    <property type="evidence" value="ECO:0007669"/>
    <property type="project" value="UniProtKB-EC"/>
</dbReference>
<dbReference type="GO" id="GO:0051028">
    <property type="term" value="P:mRNA transport"/>
    <property type="evidence" value="ECO:0007669"/>
    <property type="project" value="UniProtKB-KW"/>
</dbReference>
<dbReference type="GO" id="GO:0015031">
    <property type="term" value="P:protein transport"/>
    <property type="evidence" value="ECO:0007669"/>
    <property type="project" value="UniProtKB-KW"/>
</dbReference>
<dbReference type="CDD" id="cd17963">
    <property type="entry name" value="DEADc_DDX19_DDX25"/>
    <property type="match status" value="1"/>
</dbReference>
<dbReference type="CDD" id="cd18787">
    <property type="entry name" value="SF2_C_DEAD"/>
    <property type="match status" value="1"/>
</dbReference>
<dbReference type="FunFam" id="3.40.50.300:FF:000849">
    <property type="entry name" value="ATP-dependent RNA helicase DBP5"/>
    <property type="match status" value="1"/>
</dbReference>
<dbReference type="Gene3D" id="3.40.50.300">
    <property type="entry name" value="P-loop containing nucleotide triphosphate hydrolases"/>
    <property type="match status" value="2"/>
</dbReference>
<dbReference type="InterPro" id="IPR011545">
    <property type="entry name" value="DEAD/DEAH_box_helicase_dom"/>
</dbReference>
<dbReference type="InterPro" id="IPR014001">
    <property type="entry name" value="Helicase_ATP-bd"/>
</dbReference>
<dbReference type="InterPro" id="IPR001650">
    <property type="entry name" value="Helicase_C-like"/>
</dbReference>
<dbReference type="InterPro" id="IPR027417">
    <property type="entry name" value="P-loop_NTPase"/>
</dbReference>
<dbReference type="InterPro" id="IPR000629">
    <property type="entry name" value="RNA-helicase_DEAD-box_CS"/>
</dbReference>
<dbReference type="InterPro" id="IPR014014">
    <property type="entry name" value="RNA_helicase_DEAD_Q_motif"/>
</dbReference>
<dbReference type="PANTHER" id="PTHR47958">
    <property type="entry name" value="ATP-DEPENDENT RNA HELICASE DBP3"/>
    <property type="match status" value="1"/>
</dbReference>
<dbReference type="Pfam" id="PF00270">
    <property type="entry name" value="DEAD"/>
    <property type="match status" value="1"/>
</dbReference>
<dbReference type="Pfam" id="PF00271">
    <property type="entry name" value="Helicase_C"/>
    <property type="match status" value="1"/>
</dbReference>
<dbReference type="SMART" id="SM00487">
    <property type="entry name" value="DEXDc"/>
    <property type="match status" value="1"/>
</dbReference>
<dbReference type="SMART" id="SM00490">
    <property type="entry name" value="HELICc"/>
    <property type="match status" value="1"/>
</dbReference>
<dbReference type="SUPFAM" id="SSF52540">
    <property type="entry name" value="P-loop containing nucleoside triphosphate hydrolases"/>
    <property type="match status" value="1"/>
</dbReference>
<dbReference type="PROSITE" id="PS00039">
    <property type="entry name" value="DEAD_ATP_HELICASE"/>
    <property type="match status" value="1"/>
</dbReference>
<dbReference type="PROSITE" id="PS51192">
    <property type="entry name" value="HELICASE_ATP_BIND_1"/>
    <property type="match status" value="1"/>
</dbReference>
<dbReference type="PROSITE" id="PS51194">
    <property type="entry name" value="HELICASE_CTER"/>
    <property type="match status" value="1"/>
</dbReference>
<dbReference type="PROSITE" id="PS51195">
    <property type="entry name" value="Q_MOTIF"/>
    <property type="match status" value="1"/>
</dbReference>
<organism>
    <name type="scientific">Coccidioides immitis (strain RS)</name>
    <name type="common">Valley fever fungus</name>
    <dbReference type="NCBI Taxonomy" id="246410"/>
    <lineage>
        <taxon>Eukaryota</taxon>
        <taxon>Fungi</taxon>
        <taxon>Dikarya</taxon>
        <taxon>Ascomycota</taxon>
        <taxon>Pezizomycotina</taxon>
        <taxon>Eurotiomycetes</taxon>
        <taxon>Eurotiomycetidae</taxon>
        <taxon>Onygenales</taxon>
        <taxon>Onygenaceae</taxon>
        <taxon>Coccidioides</taxon>
    </lineage>
</organism>
<protein>
    <recommendedName>
        <fullName>ATP-dependent RNA helicase DBP5</fullName>
        <ecNumber>3.6.4.13</ecNumber>
    </recommendedName>
</protein>
<reference key="1">
    <citation type="journal article" date="2009" name="Genome Res.">
        <title>Comparative genomic analyses of the human fungal pathogens Coccidioides and their relatives.</title>
        <authorList>
            <person name="Sharpton T.J."/>
            <person name="Stajich J.E."/>
            <person name="Rounsley S.D."/>
            <person name="Gardner M.J."/>
            <person name="Wortman J.R."/>
            <person name="Jordar V.S."/>
            <person name="Maiti R."/>
            <person name="Kodira C.D."/>
            <person name="Neafsey D.E."/>
            <person name="Zeng Q."/>
            <person name="Hung C.-Y."/>
            <person name="McMahan C."/>
            <person name="Muszewska A."/>
            <person name="Grynberg M."/>
            <person name="Mandel M.A."/>
            <person name="Kellner E.M."/>
            <person name="Barker B.M."/>
            <person name="Galgiani J.N."/>
            <person name="Orbach M.J."/>
            <person name="Kirkland T.N."/>
            <person name="Cole G.T."/>
            <person name="Henn M.R."/>
            <person name="Birren B.W."/>
            <person name="Taylor J.W."/>
        </authorList>
    </citation>
    <scope>NUCLEOTIDE SEQUENCE [LARGE SCALE GENOMIC DNA]</scope>
    <source>
        <strain>RS</strain>
    </source>
</reference>
<reference key="2">
    <citation type="journal article" date="2010" name="Genome Res.">
        <title>Population genomic sequencing of Coccidioides fungi reveals recent hybridization and transposon control.</title>
        <authorList>
            <person name="Neafsey D.E."/>
            <person name="Barker B.M."/>
            <person name="Sharpton T.J."/>
            <person name="Stajich J.E."/>
            <person name="Park D.J."/>
            <person name="Whiston E."/>
            <person name="Hung C.-Y."/>
            <person name="McMahan C."/>
            <person name="White J."/>
            <person name="Sykes S."/>
            <person name="Heiman D."/>
            <person name="Young S."/>
            <person name="Zeng Q."/>
            <person name="Abouelleil A."/>
            <person name="Aftuck L."/>
            <person name="Bessette D."/>
            <person name="Brown A."/>
            <person name="FitzGerald M."/>
            <person name="Lui A."/>
            <person name="Macdonald J.P."/>
            <person name="Priest M."/>
            <person name="Orbach M.J."/>
            <person name="Galgiani J.N."/>
            <person name="Kirkland T.N."/>
            <person name="Cole G.T."/>
            <person name="Birren B.W."/>
            <person name="Henn M.R."/>
            <person name="Taylor J.W."/>
            <person name="Rounsley S.D."/>
        </authorList>
    </citation>
    <scope>GENOME REANNOTATION</scope>
    <source>
        <strain>RS</strain>
    </source>
</reference>